<reference key="1">
    <citation type="submission" date="2005-10" db="EMBL/GenBank/DDBJ databases">
        <title>Molecular cloning and sequence analysis of a type I metalloproteinase from Bothrops asper snake venom.</title>
        <authorList>
            <person name="Arce V."/>
            <person name="Azofeifa G."/>
            <person name="Flores M."/>
            <person name="Alape A."/>
        </authorList>
    </citation>
    <scope>NUCLEOTIDE SEQUENCE [MRNA]</scope>
    <source>
        <tissue>Venom gland</tissue>
    </source>
</reference>
<reference evidence="12" key="2">
    <citation type="journal article" date="2003" name="Protein Sci.">
        <title>Amino acid sequence and crystal structure of BaP1, a metalloproteinase from Bothrops asper snake venom that exerts multiple tissue-damaging activities.</title>
        <authorList>
            <person name="Watanabe L."/>
            <person name="Shannon J.D."/>
            <person name="Valente R.H."/>
            <person name="Rucavado A."/>
            <person name="Alape-Giron A."/>
            <person name="Kamiguti A.S."/>
            <person name="Theakston R.D.G."/>
            <person name="Fox J.W."/>
            <person name="Gutierrez J.M."/>
            <person name="Arni R.K."/>
        </authorList>
    </citation>
    <scope>PROTEIN SEQUENCE OF 192-394</scope>
    <scope>COFACTOR</scope>
    <scope>SUBUNIT</scope>
    <scope>MASS SPECTROMETRY</scope>
    <scope>PYROGLUTAMATE FORMATION AT GLN-192</scope>
    <scope>DISULFIDE BONDS</scope>
    <scope>X-RAY CRYSTALLOGRAPHY (1.93 ANGSTROMS) IN COMPLEX WITH ZINC ION</scope>
    <scope>SUBCELLULAR LOCATION</scope>
    <source>
        <tissue>Venom</tissue>
    </source>
</reference>
<reference key="3">
    <citation type="journal article" date="1995" name="Toxicon">
        <title>Isolation and characterization of a metalloproteinase with weak hemorrhagic activity from the venom of the snake Bothrops asper (terciopelo).</title>
        <authorList>
            <person name="Gutierrez J.M."/>
            <person name="Romero M."/>
            <person name="Diaz C."/>
            <person name="Borkow G."/>
            <person name="Ovadia M."/>
        </authorList>
    </citation>
    <scope>FUNCTION</scope>
    <scope>ACTIVITY REGULATION</scope>
    <scope>BIOPHYSICOCHEMICAL PROPERTIES</scope>
    <scope>SUBCELLULAR LOCATION</scope>
    <source>
        <strain>Costa Rica</strain>
        <tissue>Venom</tissue>
    </source>
</reference>
<reference key="4">
    <citation type="journal article" date="2000" name="Mediators Inflamm.">
        <title>Bothrops asper snake venom and its metalloproteinase BaP-1 activate the complement system. Role in leucocyte recruitment.</title>
        <authorList>
            <person name="Farsky S.H.P."/>
            <person name="Goncalves L.R.C."/>
            <person name="Gutierrez J.M."/>
            <person name="Correa A.P."/>
            <person name="Rucavado A."/>
            <person name="Gasque P."/>
            <person name="Tambourgi D.V."/>
        </authorList>
    </citation>
    <scope>FUNCTION</scope>
</reference>
<reference key="5">
    <citation type="journal article" date="2010" name="Toxicon">
        <title>Isolation and biological characterization of Batx-I, a weak hemorrhagic and fibrinogenolytic PI metalloproteinase from Colombian Bothrops atrox venom.</title>
        <authorList>
            <person name="Patino A.C."/>
            <person name="Pereanez J.A."/>
            <person name="Nunez V."/>
            <person name="Benjumea D.M."/>
            <person name="Fernandez M."/>
            <person name="Rucavado A."/>
            <person name="Sanz L."/>
            <person name="Calvete J.J."/>
        </authorList>
    </citation>
    <scope>FUNCTION</scope>
    <scope>ACTIVITY REGULATION</scope>
    <source>
        <strain>Colombia</strain>
        <tissue>Venom</tissue>
    </source>
</reference>
<reference key="6">
    <citation type="journal article" date="2013" name="J. Proteomics">
        <title>Proteomic analysis of Bothrops pirajai snake venom and characterization of BpirMP, a new P-I metalloproteinase.</title>
        <authorList>
            <person name="Bernardes C.P."/>
            <person name="Menaldo D.L."/>
            <person name="Camacho E."/>
            <person name="Rosa J.C."/>
            <person name="Escalante T."/>
            <person name="Rucavado A."/>
            <person name="Lomonte B."/>
            <person name="Gutierrez J.M."/>
            <person name="Sampaio S.V."/>
        </authorList>
    </citation>
    <scope>FUNCTION</scope>
</reference>
<feature type="signal peptide" evidence="2">
    <location>
        <begin position="1"/>
        <end position="20"/>
    </location>
</feature>
<feature type="propeptide" id="PRO_0000330008" evidence="10">
    <location>
        <begin position="21"/>
        <end position="191"/>
    </location>
</feature>
<feature type="chain" id="PRO_0000078199" description="Snake venom metalloproteinase BaP1" evidence="5">
    <location>
        <begin position="192"/>
        <end position="394"/>
    </location>
</feature>
<feature type="propeptide" id="PRO_0000330009" evidence="10">
    <location>
        <begin position="395"/>
        <end position="408"/>
    </location>
</feature>
<feature type="domain" description="Peptidase M12B" evidence="3">
    <location>
        <begin position="198"/>
        <end position="394"/>
    </location>
</feature>
<feature type="active site" evidence="3">
    <location>
        <position position="335"/>
    </location>
</feature>
<feature type="binding site" evidence="5 13">
    <location>
        <position position="334"/>
    </location>
    <ligand>
        <name>Zn(2+)</name>
        <dbReference type="ChEBI" id="CHEBI:29105"/>
        <note>catalytic</note>
    </ligand>
</feature>
<feature type="binding site" evidence="5 13">
    <location>
        <position position="338"/>
    </location>
    <ligand>
        <name>Zn(2+)</name>
        <dbReference type="ChEBI" id="CHEBI:29105"/>
        <note>catalytic</note>
    </ligand>
</feature>
<feature type="binding site" evidence="5 13">
    <location>
        <position position="344"/>
    </location>
    <ligand>
        <name>Zn(2+)</name>
        <dbReference type="ChEBI" id="CHEBI:29105"/>
        <note>catalytic</note>
    </ligand>
</feature>
<feature type="modified residue" description="Pyrrolidone carboxylic acid" evidence="5">
    <location>
        <position position="192"/>
    </location>
</feature>
<feature type="disulfide bond" evidence="5 13">
    <location>
        <begin position="309"/>
        <end position="389"/>
    </location>
</feature>
<feature type="disulfide bond" evidence="5 13">
    <location>
        <begin position="349"/>
        <end position="373"/>
    </location>
</feature>
<feature type="disulfide bond" evidence="5 13">
    <location>
        <begin position="351"/>
        <end position="356"/>
    </location>
</feature>
<feature type="strand" evidence="15">
    <location>
        <begin position="202"/>
        <end position="206"/>
    </location>
</feature>
<feature type="helix" evidence="15">
    <location>
        <begin position="208"/>
        <end position="213"/>
    </location>
</feature>
<feature type="turn" evidence="15">
    <location>
        <begin position="214"/>
        <end position="216"/>
    </location>
</feature>
<feature type="helix" evidence="15">
    <location>
        <begin position="218"/>
        <end position="236"/>
    </location>
</feature>
<feature type="helix" evidence="15">
    <location>
        <begin position="237"/>
        <end position="239"/>
    </location>
</feature>
<feature type="strand" evidence="15">
    <location>
        <begin position="245"/>
        <end position="250"/>
    </location>
</feature>
<feature type="strand" evidence="14">
    <location>
        <begin position="252"/>
        <end position="254"/>
    </location>
</feature>
<feature type="helix" evidence="15">
    <location>
        <begin position="263"/>
        <end position="276"/>
    </location>
</feature>
<feature type="turn" evidence="15">
    <location>
        <begin position="277"/>
        <end position="281"/>
    </location>
</feature>
<feature type="strand" evidence="15">
    <location>
        <begin position="285"/>
        <end position="291"/>
    </location>
</feature>
<feature type="helix" evidence="15">
    <location>
        <begin position="296"/>
        <end position="298"/>
    </location>
</feature>
<feature type="strand" evidence="15">
    <location>
        <begin position="301"/>
        <end position="303"/>
    </location>
</feature>
<feature type="turn" evidence="15">
    <location>
        <begin position="311"/>
        <end position="313"/>
    </location>
</feature>
<feature type="strand" evidence="15">
    <location>
        <begin position="314"/>
        <end position="319"/>
    </location>
</feature>
<feature type="helix" evidence="15">
    <location>
        <begin position="325"/>
        <end position="339"/>
    </location>
</feature>
<feature type="strand" evidence="15">
    <location>
        <begin position="352"/>
        <end position="356"/>
    </location>
</feature>
<feature type="helix" evidence="15">
    <location>
        <begin position="372"/>
        <end position="385"/>
    </location>
</feature>
<feature type="helix" evidence="15">
    <location>
        <begin position="388"/>
        <end position="390"/>
    </location>
</feature>
<organism>
    <name type="scientific">Bothrops asper</name>
    <name type="common">Terciopelo</name>
    <dbReference type="NCBI Taxonomy" id="8722"/>
    <lineage>
        <taxon>Eukaryota</taxon>
        <taxon>Metazoa</taxon>
        <taxon>Chordata</taxon>
        <taxon>Craniata</taxon>
        <taxon>Vertebrata</taxon>
        <taxon>Euteleostomi</taxon>
        <taxon>Lepidosauria</taxon>
        <taxon>Squamata</taxon>
        <taxon>Bifurcata</taxon>
        <taxon>Unidentata</taxon>
        <taxon>Episquamata</taxon>
        <taxon>Toxicofera</taxon>
        <taxon>Serpentes</taxon>
        <taxon>Colubroidea</taxon>
        <taxon>Viperidae</taxon>
        <taxon>Crotalinae</taxon>
        <taxon>Bothrops</taxon>
    </lineage>
</organism>
<sequence length="408" mass="45936">MIEVLLVTICLAVFPYQGSSIILESGNVNDYEVVYPRKVTELPKGAVQPKYEDAMQYEFKVNGEPVVLHLEKNKGLFSEDYSETHYSPDGRKIITYPSFEDHCYYHGRIENDADSTASISACNGLKGHFKLQGETYLIEPLKLSDSEAHAVYKYENVEKEDEAPKMCGVTETNWESYEPIKKASQSNLTPEQQRFSPRYIELAVVADHGIFTKYNSNLNTIRTRVHEMLNTVNGFYRSVDVHAPLANLEVWSKQDLIKVQKDSSKTLKSFGEWRERDLLPRISHDHAQLLTAVVFDGNTIGRAYTGGMCDPRHSVGVVRDHSKNNLWVAVTMAHELGHNLGIHHDTGSCSCGAKSCIMASVLSKVLSYEFSDCSQNQYETYLTNHNPQCILNKPLLTVSGNELLEAGE</sequence>
<proteinExistence type="evidence at protein level"/>
<dbReference type="EC" id="3.4.24.-"/>
<dbReference type="EMBL" id="DQ247726">
    <property type="protein sequence ID" value="ABB76282.1"/>
    <property type="molecule type" value="mRNA"/>
</dbReference>
<dbReference type="PDB" id="1ND1">
    <property type="method" value="X-ray"/>
    <property type="resolution" value="1.93 A"/>
    <property type="chains" value="A=194-394"/>
</dbReference>
<dbReference type="PDB" id="2W12">
    <property type="method" value="X-ray"/>
    <property type="resolution" value="1.46 A"/>
    <property type="chains" value="A=194-394"/>
</dbReference>
<dbReference type="PDB" id="2W13">
    <property type="method" value="X-ray"/>
    <property type="resolution" value="1.14 A"/>
    <property type="chains" value="A=194-394"/>
</dbReference>
<dbReference type="PDB" id="2W14">
    <property type="method" value="X-ray"/>
    <property type="resolution" value="1.08 A"/>
    <property type="chains" value="A=194-394"/>
</dbReference>
<dbReference type="PDB" id="2W15">
    <property type="method" value="X-ray"/>
    <property type="resolution" value="1.05 A"/>
    <property type="chains" value="A=194-394"/>
</dbReference>
<dbReference type="PDBsum" id="1ND1"/>
<dbReference type="PDBsum" id="2W12"/>
<dbReference type="PDBsum" id="2W13"/>
<dbReference type="PDBsum" id="2W14"/>
<dbReference type="PDBsum" id="2W15"/>
<dbReference type="SMR" id="P83512"/>
<dbReference type="BindingDB" id="P83512"/>
<dbReference type="ChEMBL" id="CHEMBL2079851"/>
<dbReference type="DrugCentral" id="P83512"/>
<dbReference type="MEROPS" id="M12.311"/>
<dbReference type="EvolutionaryTrace" id="P83512"/>
<dbReference type="GO" id="GO:0005576">
    <property type="term" value="C:extracellular region"/>
    <property type="evidence" value="ECO:0007669"/>
    <property type="project" value="UniProtKB-SubCell"/>
</dbReference>
<dbReference type="GO" id="GO:0005886">
    <property type="term" value="C:plasma membrane"/>
    <property type="evidence" value="ECO:0007669"/>
    <property type="project" value="TreeGrafter"/>
</dbReference>
<dbReference type="GO" id="GO:0046872">
    <property type="term" value="F:metal ion binding"/>
    <property type="evidence" value="ECO:0007669"/>
    <property type="project" value="UniProtKB-KW"/>
</dbReference>
<dbReference type="GO" id="GO:0004222">
    <property type="term" value="F:metalloendopeptidase activity"/>
    <property type="evidence" value="ECO:0007669"/>
    <property type="project" value="InterPro"/>
</dbReference>
<dbReference type="GO" id="GO:0090729">
    <property type="term" value="F:toxin activity"/>
    <property type="evidence" value="ECO:0007669"/>
    <property type="project" value="UniProtKB-KW"/>
</dbReference>
<dbReference type="GO" id="GO:0006935">
    <property type="term" value="P:chemotaxis"/>
    <property type="evidence" value="ECO:0007669"/>
    <property type="project" value="UniProtKB-KW"/>
</dbReference>
<dbReference type="GO" id="GO:0006508">
    <property type="term" value="P:proteolysis"/>
    <property type="evidence" value="ECO:0007669"/>
    <property type="project" value="UniProtKB-KW"/>
</dbReference>
<dbReference type="CDD" id="cd04269">
    <property type="entry name" value="ZnMc_adamalysin_II_like"/>
    <property type="match status" value="1"/>
</dbReference>
<dbReference type="FunFam" id="3.40.390.10:FF:000002">
    <property type="entry name" value="Disintegrin and metalloproteinase domain-containing protein 22"/>
    <property type="match status" value="1"/>
</dbReference>
<dbReference type="Gene3D" id="3.40.390.10">
    <property type="entry name" value="Collagenase (Catalytic Domain)"/>
    <property type="match status" value="1"/>
</dbReference>
<dbReference type="InterPro" id="IPR024079">
    <property type="entry name" value="MetalloPept_cat_dom_sf"/>
</dbReference>
<dbReference type="InterPro" id="IPR001590">
    <property type="entry name" value="Peptidase_M12B"/>
</dbReference>
<dbReference type="InterPro" id="IPR002870">
    <property type="entry name" value="Peptidase_M12B_N"/>
</dbReference>
<dbReference type="InterPro" id="IPR034027">
    <property type="entry name" value="Reprolysin_adamalysin"/>
</dbReference>
<dbReference type="PANTHER" id="PTHR11905">
    <property type="entry name" value="ADAM A DISINTEGRIN AND METALLOPROTEASE DOMAIN"/>
    <property type="match status" value="1"/>
</dbReference>
<dbReference type="PANTHER" id="PTHR11905:SF32">
    <property type="entry name" value="DISINTEGRIN AND METALLOPROTEINASE DOMAIN-CONTAINING PROTEIN 28"/>
    <property type="match status" value="1"/>
</dbReference>
<dbReference type="Pfam" id="PF01562">
    <property type="entry name" value="Pep_M12B_propep"/>
    <property type="match status" value="1"/>
</dbReference>
<dbReference type="Pfam" id="PF01421">
    <property type="entry name" value="Reprolysin"/>
    <property type="match status" value="1"/>
</dbReference>
<dbReference type="SUPFAM" id="SSF55486">
    <property type="entry name" value="Metalloproteases ('zincins'), catalytic domain"/>
    <property type="match status" value="1"/>
</dbReference>
<dbReference type="PROSITE" id="PS50215">
    <property type="entry name" value="ADAM_MEPRO"/>
    <property type="match status" value="1"/>
</dbReference>
<dbReference type="PROSITE" id="PS00142">
    <property type="entry name" value="ZINC_PROTEASE"/>
    <property type="match status" value="1"/>
</dbReference>
<keyword id="KW-0002">3D-structure</keyword>
<keyword id="KW-0145">Chemotaxis</keyword>
<keyword id="KW-1216">Complement system impairing toxin</keyword>
<keyword id="KW-0903">Direct protein sequencing</keyword>
<keyword id="KW-1015">Disulfide bond</keyword>
<keyword id="KW-1206">Fibrinogenolytic toxin</keyword>
<keyword id="KW-1200">Hemorrhagic toxin</keyword>
<keyword id="KW-1199">Hemostasis impairing toxin</keyword>
<keyword id="KW-0378">Hydrolase</keyword>
<keyword id="KW-0479">Metal-binding</keyword>
<keyword id="KW-0482">Metalloprotease</keyword>
<keyword id="KW-0959">Myotoxin</keyword>
<keyword id="KW-0645">Protease</keyword>
<keyword id="KW-0873">Pyrrolidone carboxylic acid</keyword>
<keyword id="KW-0964">Secreted</keyword>
<keyword id="KW-0732">Signal</keyword>
<keyword id="KW-0800">Toxin</keyword>
<keyword id="KW-0862">Zinc</keyword>
<name>VM1B1_BOTAS</name>
<protein>
    <recommendedName>
        <fullName>Snake venom metalloproteinase BaP1</fullName>
        <shortName>SVMP</shortName>
        <ecNumber>3.4.24.-</ecNumber>
    </recommendedName>
    <alternativeName>
        <fullName>Hemorrhagic metalloproteinase BaP1</fullName>
        <shortName>Bap-1</shortName>
    </alternativeName>
</protein>
<evidence type="ECO:0000250" key="1"/>
<evidence type="ECO:0000255" key="2"/>
<evidence type="ECO:0000255" key="3">
    <source>
        <dbReference type="PROSITE-ProRule" id="PRU00276"/>
    </source>
</evidence>
<evidence type="ECO:0000269" key="4">
    <source>
    </source>
</evidence>
<evidence type="ECO:0000269" key="5">
    <source>
    </source>
</evidence>
<evidence type="ECO:0000269" key="6">
    <source>
    </source>
</evidence>
<evidence type="ECO:0000269" key="7">
    <source>
    </source>
</evidence>
<evidence type="ECO:0000269" key="8">
    <source>
    </source>
</evidence>
<evidence type="ECO:0000305" key="9"/>
<evidence type="ECO:0000305" key="10">
    <source>
    </source>
</evidence>
<evidence type="ECO:0000305" key="11">
    <source>
    </source>
</evidence>
<evidence type="ECO:0000312" key="12">
    <source>
        <dbReference type="PDB" id="1ND1"/>
    </source>
</evidence>
<evidence type="ECO:0007744" key="13">
    <source>
        <dbReference type="PDB" id="1ND1"/>
    </source>
</evidence>
<evidence type="ECO:0007829" key="14">
    <source>
        <dbReference type="PDB" id="2W14"/>
    </source>
</evidence>
<evidence type="ECO:0007829" key="15">
    <source>
        <dbReference type="PDB" id="2W15"/>
    </source>
</evidence>
<comment type="function">
    <text evidence="4 6 7 8">Zinc metalloprotease that exhibits a weak hemorrhagic activity (with a minimum hemorrhagic dose of 20 ug by intradermal and intramuscular injection into mice). The basal membrane components collagen (all chains of type IV) (COL4A4), laminin and nidogen are all degraded by this toxin (PubMed:23385358). Rapidly degrades the Aalpha-chain (FGA) of fibrinogen, and later on, degrades the Bbeta-chain (FGB) of fibrinogen (PubMed:7778126). Also activates the complement system, and induces rat neutrophil chemotaxis (PubMed:11200361). Induces edema in mouse food pad and shows a mild myotoxicity (PubMed:7778126).</text>
</comment>
<comment type="cofactor">
    <cofactor evidence="1">
        <name>Zn(2+)</name>
        <dbReference type="ChEBI" id="CHEBI:29105"/>
    </cofactor>
    <text evidence="1">Binds 1 zinc ion per subunit.</text>
</comment>
<comment type="activity regulation">
    <text evidence="6 8">Inhibited by EDTA, partially inhibited by o-phenantropine, and not inhibited by PMSF, pepstatin A, and aprotinin.</text>
</comment>
<comment type="biophysicochemical properties">
    <phDependence>
        <text evidence="8">Optimum pH is 8.0.</text>
    </phDependence>
</comment>
<comment type="subunit">
    <text evidence="5">Monomer.</text>
</comment>
<comment type="subcellular location">
    <subcellularLocation>
        <location evidence="5 8">Secreted</location>
    </subcellularLocation>
</comment>
<comment type="tissue specificity">
    <text evidence="10 11">Expressed by the venom gland.</text>
</comment>
<comment type="mass spectrometry" mass="22735.0" method="MALDI" evidence="5"/>
<comment type="miscellaneous">
    <text>Negative results: does not degrade the gamma-chain (FGG) of fibrinogen. Lacks coagulant and defibrinating activities.</text>
</comment>
<comment type="similarity">
    <text evidence="9">Belongs to the venom metalloproteinase (M12B) family. P-I subfamily.</text>
</comment>
<accession>P83512</accession>
<accession>Q072L4</accession>